<keyword id="KW-1185">Reference proteome</keyword>
<keyword id="KW-0687">Ribonucleoprotein</keyword>
<keyword id="KW-0689">Ribosomal protein</keyword>
<comment type="similarity">
    <text evidence="1">Belongs to the eukaryotic ribosomal protein eL31 family.</text>
</comment>
<reference key="1">
    <citation type="journal article" date="1997" name="Nature">
        <title>The complete genome sequence of the hyperthermophilic, sulphate-reducing archaeon Archaeoglobus fulgidus.</title>
        <authorList>
            <person name="Klenk H.-P."/>
            <person name="Clayton R.A."/>
            <person name="Tomb J.-F."/>
            <person name="White O."/>
            <person name="Nelson K.E."/>
            <person name="Ketchum K.A."/>
            <person name="Dodson R.J."/>
            <person name="Gwinn M.L."/>
            <person name="Hickey E.K."/>
            <person name="Peterson J.D."/>
            <person name="Richardson D.L."/>
            <person name="Kerlavage A.R."/>
            <person name="Graham D.E."/>
            <person name="Kyrpides N.C."/>
            <person name="Fleischmann R.D."/>
            <person name="Quackenbush J."/>
            <person name="Lee N.H."/>
            <person name="Sutton G.G."/>
            <person name="Gill S.R."/>
            <person name="Kirkness E.F."/>
            <person name="Dougherty B.A."/>
            <person name="McKenney K."/>
            <person name="Adams M.D."/>
            <person name="Loftus B.J."/>
            <person name="Peterson S.N."/>
            <person name="Reich C.I."/>
            <person name="McNeil L.K."/>
            <person name="Badger J.H."/>
            <person name="Glodek A."/>
            <person name="Zhou L."/>
            <person name="Overbeek R."/>
            <person name="Gocayne J.D."/>
            <person name="Weidman J.F."/>
            <person name="McDonald L.A."/>
            <person name="Utterback T.R."/>
            <person name="Cotton M.D."/>
            <person name="Spriggs T."/>
            <person name="Artiach P."/>
            <person name="Kaine B.P."/>
            <person name="Sykes S.M."/>
            <person name="Sadow P.W."/>
            <person name="D'Andrea K.P."/>
            <person name="Bowman C."/>
            <person name="Fujii C."/>
            <person name="Garland S.A."/>
            <person name="Mason T.M."/>
            <person name="Olsen G.J."/>
            <person name="Fraser C.M."/>
            <person name="Smith H.O."/>
            <person name="Woese C.R."/>
            <person name="Venter J.C."/>
        </authorList>
    </citation>
    <scope>NUCLEOTIDE SEQUENCE [LARGE SCALE GENOMIC DNA]</scope>
    <source>
        <strain>ATCC 49558 / DSM 4304 / JCM 9628 / NBRC 100126 / VC-16</strain>
    </source>
</reference>
<protein>
    <recommendedName>
        <fullName evidence="1">Large ribosomal subunit protein eL31</fullName>
    </recommendedName>
    <alternativeName>
        <fullName>50S ribosomal protein L31e</fullName>
    </alternativeName>
</protein>
<evidence type="ECO:0000305" key="1"/>
<accession>O28213</accession>
<sequence>MAKVVVERVYSIRLRHKMKRYPRWLRAKKAAKYVRKFLSRHMKVEPENVKIDTAVNEKIWERGAEKPPTKIRVRAVKFDDGIVEVELA</sequence>
<gene>
    <name type="primary">rpl31e</name>
    <name type="ordered locus">AF_2066</name>
</gene>
<proteinExistence type="inferred from homology"/>
<dbReference type="EMBL" id="AE000782">
    <property type="protein sequence ID" value="AAB89205.1"/>
    <property type="molecule type" value="Genomic_DNA"/>
</dbReference>
<dbReference type="PIR" id="A69508">
    <property type="entry name" value="A69508"/>
</dbReference>
<dbReference type="RefSeq" id="WP_010879558.1">
    <property type="nucleotide sequence ID" value="NC_000917.1"/>
</dbReference>
<dbReference type="SMR" id="O28213"/>
<dbReference type="STRING" id="224325.AF_2066"/>
<dbReference type="PaxDb" id="224325-AF_2066"/>
<dbReference type="EnsemblBacteria" id="AAB89205">
    <property type="protein sequence ID" value="AAB89205"/>
    <property type="gene ID" value="AF_2066"/>
</dbReference>
<dbReference type="GeneID" id="1485293"/>
<dbReference type="KEGG" id="afu:AF_2066"/>
<dbReference type="eggNOG" id="arCOG04473">
    <property type="taxonomic scope" value="Archaea"/>
</dbReference>
<dbReference type="HOGENOM" id="CLU_112570_3_2_2"/>
<dbReference type="OrthoDB" id="10127at2157"/>
<dbReference type="PhylomeDB" id="O28213"/>
<dbReference type="Proteomes" id="UP000002199">
    <property type="component" value="Chromosome"/>
</dbReference>
<dbReference type="GO" id="GO:0022625">
    <property type="term" value="C:cytosolic large ribosomal subunit"/>
    <property type="evidence" value="ECO:0007669"/>
    <property type="project" value="TreeGrafter"/>
</dbReference>
<dbReference type="GO" id="GO:0003735">
    <property type="term" value="F:structural constituent of ribosome"/>
    <property type="evidence" value="ECO:0007669"/>
    <property type="project" value="InterPro"/>
</dbReference>
<dbReference type="GO" id="GO:0002181">
    <property type="term" value="P:cytoplasmic translation"/>
    <property type="evidence" value="ECO:0007669"/>
    <property type="project" value="TreeGrafter"/>
</dbReference>
<dbReference type="CDD" id="cd00463">
    <property type="entry name" value="Ribosomal_L31e"/>
    <property type="match status" value="1"/>
</dbReference>
<dbReference type="Gene3D" id="3.10.440.10">
    <property type="match status" value="1"/>
</dbReference>
<dbReference type="HAMAP" id="MF_00410">
    <property type="entry name" value="Ribosomal_eL31"/>
    <property type="match status" value="1"/>
</dbReference>
<dbReference type="InterPro" id="IPR000054">
    <property type="entry name" value="Ribosomal_eL31"/>
</dbReference>
<dbReference type="InterPro" id="IPR020052">
    <property type="entry name" value="Ribosomal_eL31_CS"/>
</dbReference>
<dbReference type="InterPro" id="IPR023621">
    <property type="entry name" value="Ribosomal_eL31_dom_sf"/>
</dbReference>
<dbReference type="NCBIfam" id="NF002258">
    <property type="entry name" value="PRK01192.1-1"/>
    <property type="match status" value="1"/>
</dbReference>
<dbReference type="PANTHER" id="PTHR10956">
    <property type="entry name" value="60S RIBOSOMAL PROTEIN L31"/>
    <property type="match status" value="1"/>
</dbReference>
<dbReference type="PANTHER" id="PTHR10956:SF0">
    <property type="entry name" value="60S RIBOSOMAL PROTEIN L31"/>
    <property type="match status" value="1"/>
</dbReference>
<dbReference type="Pfam" id="PF01198">
    <property type="entry name" value="Ribosomal_L31e"/>
    <property type="match status" value="1"/>
</dbReference>
<dbReference type="SMART" id="SM01380">
    <property type="entry name" value="Ribosomal_L31e"/>
    <property type="match status" value="1"/>
</dbReference>
<dbReference type="SUPFAM" id="SSF54575">
    <property type="entry name" value="Ribosomal protein L31e"/>
    <property type="match status" value="1"/>
</dbReference>
<dbReference type="PROSITE" id="PS01144">
    <property type="entry name" value="RIBOSOMAL_L31E"/>
    <property type="match status" value="1"/>
</dbReference>
<name>RL31_ARCFU</name>
<feature type="chain" id="PRO_0000153790" description="Large ribosomal subunit protein eL31">
    <location>
        <begin position="1"/>
        <end position="88"/>
    </location>
</feature>
<organism>
    <name type="scientific">Archaeoglobus fulgidus (strain ATCC 49558 / DSM 4304 / JCM 9628 / NBRC 100126 / VC-16)</name>
    <dbReference type="NCBI Taxonomy" id="224325"/>
    <lineage>
        <taxon>Archaea</taxon>
        <taxon>Methanobacteriati</taxon>
        <taxon>Methanobacteriota</taxon>
        <taxon>Archaeoglobi</taxon>
        <taxon>Archaeoglobales</taxon>
        <taxon>Archaeoglobaceae</taxon>
        <taxon>Archaeoglobus</taxon>
    </lineage>
</organism>